<gene>
    <name type="primary">ebh</name>
    <name type="ordered locus">SAOUHSC_01447</name>
</gene>
<proteinExistence type="evidence at protein level"/>
<protein>
    <recommendedName>
        <fullName>Extracellular matrix-binding protein ebh</fullName>
    </recommendedName>
    <alternativeName>
        <fullName>ECM-binding protein homolog</fullName>
    </alternativeName>
</protein>
<comment type="function">
    <text evidence="3">Promotes bacterial attachment to both soluble and immobilized forms of fibronectin (Fn), in a dose-dependent and saturable manner.</text>
</comment>
<comment type="subcellular location">
    <subcellularLocation>
        <location evidence="4">Cell membrane</location>
        <topology evidence="4">Single-pass membrane protein</topology>
    </subcellularLocation>
</comment>
<comment type="induction">
    <text evidence="3">Expressed at the postexponential growth phase. Down-regulated by agr.</text>
</comment>
<dbReference type="EMBL" id="CP000253">
    <property type="protein sequence ID" value="ABD30536.1"/>
    <property type="molecule type" value="Genomic_DNA"/>
</dbReference>
<dbReference type="RefSeq" id="WP_001109324.1">
    <property type="nucleotide sequence ID" value="NC_007795.1"/>
</dbReference>
<dbReference type="RefSeq" id="YP_499969.1">
    <property type="nucleotide sequence ID" value="NC_007795.1"/>
</dbReference>
<dbReference type="SMR" id="Q2FYJ6"/>
<dbReference type="STRING" id="93061.SAOUHSC_01447"/>
<dbReference type="GeneID" id="3920225"/>
<dbReference type="KEGG" id="sao:SAOUHSC_01447"/>
<dbReference type="PATRIC" id="fig|93061.5.peg.1320"/>
<dbReference type="HOGENOM" id="CLU_222673_0_0_9"/>
<dbReference type="OrthoDB" id="2413604at2"/>
<dbReference type="Proteomes" id="UP000008816">
    <property type="component" value="Chromosome"/>
</dbReference>
<dbReference type="GO" id="GO:0005886">
    <property type="term" value="C:plasma membrane"/>
    <property type="evidence" value="ECO:0007669"/>
    <property type="project" value="UniProtKB-SubCell"/>
</dbReference>
<dbReference type="GO" id="GO:0003677">
    <property type="term" value="F:DNA binding"/>
    <property type="evidence" value="ECO:0000318"/>
    <property type="project" value="GO_Central"/>
</dbReference>
<dbReference type="GO" id="GO:0006355">
    <property type="term" value="P:regulation of DNA-templated transcription"/>
    <property type="evidence" value="ECO:0000318"/>
    <property type="project" value="GO_Central"/>
</dbReference>
<dbReference type="Gene3D" id="3.10.20.890">
    <property type="match status" value="1"/>
</dbReference>
<dbReference type="Gene3D" id="1.20.120.1850">
    <property type="entry name" value="Ebh helix bundles repeating unit (S and A modules)"/>
    <property type="match status" value="8"/>
</dbReference>
<dbReference type="Gene3D" id="1.20.5.420">
    <property type="entry name" value="Immunoglobulin FC, subunit C"/>
    <property type="match status" value="73"/>
</dbReference>
<dbReference type="InterPro" id="IPR011439">
    <property type="entry name" value="DUF1542"/>
</dbReference>
<dbReference type="InterPro" id="IPR026361">
    <property type="entry name" value="Ebh_dom"/>
</dbReference>
<dbReference type="InterPro" id="IPR051197">
    <property type="entry name" value="ECM-binding_protein"/>
</dbReference>
<dbReference type="InterPro" id="IPR020840">
    <property type="entry name" value="Extracell_matrix-bd_GA"/>
</dbReference>
<dbReference type="InterPro" id="IPR002988">
    <property type="entry name" value="GA_module"/>
</dbReference>
<dbReference type="InterPro" id="IPR009063">
    <property type="entry name" value="Ig/albumin-bd_sf"/>
</dbReference>
<dbReference type="InterPro" id="IPR005877">
    <property type="entry name" value="YSIRK_signal_dom"/>
</dbReference>
<dbReference type="NCBIfam" id="TIGR04264">
    <property type="entry name" value="hyperosmo_Ebh"/>
    <property type="match status" value="1"/>
</dbReference>
<dbReference type="NCBIfam" id="TIGR01168">
    <property type="entry name" value="YSIRK_signal"/>
    <property type="match status" value="1"/>
</dbReference>
<dbReference type="PANTHER" id="PTHR33150">
    <property type="entry name" value="EXTRACELLULAR MATRIX-BINDING PROTEIN EBH"/>
    <property type="match status" value="1"/>
</dbReference>
<dbReference type="PANTHER" id="PTHR33150:SF1">
    <property type="entry name" value="EXTRACELLULAR MATRIX-BINDING PROTEIN EBH"/>
    <property type="match status" value="1"/>
</dbReference>
<dbReference type="Pfam" id="PF07564">
    <property type="entry name" value="DUF1542"/>
    <property type="match status" value="8"/>
</dbReference>
<dbReference type="Pfam" id="PF07554">
    <property type="entry name" value="FIVAR"/>
    <property type="match status" value="44"/>
</dbReference>
<dbReference type="Pfam" id="PF01468">
    <property type="entry name" value="GA"/>
    <property type="match status" value="11"/>
</dbReference>
<dbReference type="Pfam" id="PF04650">
    <property type="entry name" value="YSIRK_signal"/>
    <property type="match status" value="1"/>
</dbReference>
<dbReference type="SMART" id="SM00844">
    <property type="entry name" value="GA"/>
    <property type="match status" value="45"/>
</dbReference>
<dbReference type="SUPFAM" id="SSF46997">
    <property type="entry name" value="Bacterial immunoglobulin/albumin-binding domains"/>
    <property type="match status" value="86"/>
</dbReference>
<organism>
    <name type="scientific">Staphylococcus aureus (strain NCTC 8325 / PS 47)</name>
    <dbReference type="NCBI Taxonomy" id="93061"/>
    <lineage>
        <taxon>Bacteria</taxon>
        <taxon>Bacillati</taxon>
        <taxon>Bacillota</taxon>
        <taxon>Bacilli</taxon>
        <taxon>Bacillales</taxon>
        <taxon>Staphylococcaceae</taxon>
        <taxon>Staphylococcus</taxon>
    </lineage>
</organism>
<evidence type="ECO:0000255" key="1"/>
<evidence type="ECO:0000256" key="2">
    <source>
        <dbReference type="SAM" id="MobiDB-lite"/>
    </source>
</evidence>
<evidence type="ECO:0000269" key="3">
    <source>
    </source>
</evidence>
<evidence type="ECO:0000305" key="4"/>
<name>EBH_STAA8</name>
<sequence>MNYRDKIQKFSIRKYTVGTFSTVIATLVFLGFNTSQAHAAETNQPASVVKQKQQSNNEQTENRESQVQNSQNSQNGQSLSATHENEQPNISQANLVDQKVAQSSTTNDEQPASQNVNTKKDSATAATTQPDKEQSKHKQNESQSANKNGNDNRAAHVENHEANVVTASDSSDNGNVQHDRNELQAFFDANYHDYRFIDRENADSGTFNYVKGIFDKINTLLGSNDPINNKDLQLAYKELEQAVALIRTMPQRQQTSRRSNRIQTRSVESRAAEPRSVSDYQNANSSYYVENANDGSGYPVGTYINASSKGAPYNLPTTPWNTLKASDSKEIALMTAKQTGDGYQWVIKFNKGHAPHQNMIFWFALPADQVPVGRTDFVTVNSDGTNVQWSHGAGAGANKPLQQMWEYGVNDPHRSHDFKIRNRSGQVIYDWPTVHIYSLEDLSRASDYFSEAGATPATKAFGRQNFEYINGQKPAESPGVPKVYTFIGQGDASYTISFKTQGPTVNKLYYAAGGRALEYNQLFMYSQLYVESTQDHQQRLNGLRQVVNRTYRIGTTKRVEVSQGNVQTKKVLESTNLNIDDFVDDPLSYVKTPSNKVLGFYSNNANTNAFRPGGAQQLNEYQLSQLFTDQKLQEAARTRNPIRLMIGFDYPDAYGNSETLVPVNLTVLPEIQHNIKFFKNDDTQNIAEKPFSKQAGHPVFYVYAGNQGNASVNLGGSVTSIQPLRINLTSNENFTDKDWQITGIPRTLHIENSTNRPNNARERNIELVGNLLPGDYFGTIRFGRKEQLFEIRVKPHTPTITTTAEQLRGTALQKVPVNISGIPLDPSALVYLVAPTNQTTNGGSEADQIPSGYTILATGTPDGVHNTITIRPQDYVVFIPPVGKQIRAVVYYNKVVASNMSNAVTILPDDIPPTINNPVGINAKYYRGDEVNFTMGVSDRHSGIKNTTITTLPNGWTSNLTKADKNNGSLSITGRVSMNQAFNSDITFKVSATDNVNNTTNDSQSKHVSIHVGKISEDAHPIVLGNTEKVVVVNPTAVSNDEKQSIITAFMNKNQNIRGYLASTDPVTVDNNGNVTLHYRDGSSTTLDATNVMTYEPVVKPEYQTVNAAKTATVTIAKGQSFSIGDIKQYFTLSNGQPIPSGTFTNITSDRTIPTAQEVSQMNAGTQLYHITATNAYHKDSEDFYISLKIIDVKQPEGDQRVYRTSTYDLTTDEISKVKQAFINANRDVITLAEGDISVTNTPNGANVSTITVNINKGRLTKSFASNLANMNFLRWVNFPQDYTVTWTNAKIANRPTDGGLSWSDDHKSLIYRYDATLGTQITTNDILTMLKATTTVPGLRNNITGNEKSQAEAGGRPNFRTTGYSQSNATTDGQRQFTLNGQVIQVLDIINPSNGYGGQPVTNSNTRANHSNSTVVNVNEPAANGAGAFTIDHVVKSNSTHNASDAVYKAQLYLTPYGPKQYVEHLNQNTGNTTDAINIYFVPSDLVNPTISVGNYTNHQVFSGETFTNTITANDNFGVQSVTVPNTSQITGTVDNNHQHVSATAPNVTSATNKTINLLATDTSGNTATTSFNVTVKPLRDKYRVGTSSTAANPVRIANISNNATVSQADQTTIINSLTFTETVPNRSYARASANEITSKTVSNVSRTGNNANVTVTVTYQDGTTSTVTVPVKHVIPEIVAHSHYTVQGQDFPAGNGSSASDYFKLSNGSDIADATITWVSGQAPNKDNTRIGEDITVTAHILIDGETTPITKTATYKVVRTVPKHVFETARGVLYPGVSDMYDAKQYVKPVNNSWSTNAQHMNFQFVGTYGPNKDVVGISTRLIRVTYDNRQTEDLTILSKVKPDPPRIDANSVTYKAGLTNQEIKVNNVLNNSSVKLFKADNTPLNVTNITHGSGFSSVVTVSDALPNGGIKAKSSISMNNVTYTTQDEHGQVVTVTRNESVDSNDSATVTVTPQLQATTEGAVFIKGGDGFDFGHVERFIQNPPHGATVAWHDSPDTWKNTVGNTHKTAVVTLPNGQGTRNVEVPVKVYPVANAKAPSRDVKGQNLTNGTDAMNYITFDPNTNTNGITAAWANRQQPNNQQAGVQHLNVDVTYPGISAAKRVPVTVNVYQFEFPQTTYTTTVGGTLASGTQASGYAHMQNATGLPTDGFTYKWNRDTTGTNDANWSAMNKPNVAKVVNAKYDVIYNGHTFATSLPAKFVVKDVQPAKPTVTETAAGAITIAPGANQTVNTHAGNVTTYADKLVIKRNGNVVTTFTRRNNTSPWVKEASAATVAGIAGTNNGITVAAGTFNPADTIQVVATQGSGETVSDEQRSDDFTVVAPQPNQATTKIWQNGHIDITPNNPSGHLINPTQAMDIAYTEKVGNGAEHSKTINVVRGQNNQWTIANKPDYVTLDAQTGKVTFNANTIKPNSSITITPKAGTGHSVSSNPSTLTAPAAHTVNTTEIVKDYGSNVTAAEINNAVQVANKRTATIKNGTAMPTNLAGGSTTTIPVTVTYNDGSTEEVQESIFTKADKRELITAKNHLDDPVSTEGKKPGTITQYNNAMHNAQQQINTAKTEAQQVINNERATPQQVSDALTKVRAAQTKIDQAKALLQNKEDNSQLVTSKNNLQSSVNQVPSTAGMTQQSIDNYNAKKREAETEITAAQRVIDNGDATAQQISDEKHRVDNALTALNQAKHDLTADTHALEQAVQQLNRTGTTTGKKPASITAYNNSIRALQSDLTSAKNSANAIIQKPIRTVQEVQSALTNVNRVNERLTQAINQLVPLADNSALKTAKTKLDEEINKSVTTDGMTQSSIQAYENAKRAGQTESTNAQNVINNGDATDQQIAAEKTKVEEKYNSLKQAIAGLTPDLAPLQTAKTQLQNDIDQPTSTTGMTSASIAAFNEKLSAARTKIQEIDRVLASHPDVATIRQNVTAANAAKSALDQARNGLTVDKAPLENAKNQLQHSIDTQTSTTGMTQDSINAYNAKLTAARNKIQQINQVLAGSPTVEQINTNTSTANQAKSDLDHARQALTPDKAPLQTAKTQLEQSINQPTDTTGMTTASLNAYNQKLQAARQKLTEINQVLNGNPTVQNINDKVTEANQAKDQLNTARQGLTLDRQPALTTLHGASNLNQAQQNNFTQQINAAQNHAALETIKSNITALNTAMTKLKDSVADNNTIKSDQNYTDATPANKQAYDNAVNAAKGVIGETTNPTMDVNTVNQKAASVKSTKDALDGQQNLQRAKTEATNAITHASDLNQAQKNALTQQVNSAQNVQAVNDIKQTTQSLNTAMTGLKRGVANHNQVVQSDNYVNADTNKKNDYNNAYNHANDIINGNAQHPVITPSDVNNALSNVTSKEHALNGEAKLNAAKQEANTALGHLNNLNNAQRQNLQSQINGAHQIDAVNTIKQNATNLNSAMGNLRQAVADKDQVKRTEDYADADTAKQNAYNSAVSSAETIINQTTNPTMSVDDVNRATSAVTSNKNALNGYEKLAQSKTDAARAIDALPHLNNAQKADVKSKINAASNIAGVNTVKQQGTDLNTAMGNLQGAINDEQTTLNSQNYQDATPSKKTAYTNAVQAAKDILNKSNGQNKTKDQVTEAMNQVNSAKNNLDGTRLLDQAKQTAKQQLNNMTHLTTAQKTNLTNQINSGTTVAGVQTVQSNANTLDQAMNTLRQSIANKDATKASEDYVDANNDKQTAYNNAVAAAETIINANSNPEMNPSTITQKAEQVNSSKTALNGDENLAAAKQNAKTYLNTLTSITDAQKNNLISQITSATRVSGVDTVKQNAQHLDQAMASLQNGINNESQVKSSEKYRDADTNKQQEYDNAITAAKAILNKSTGPNTAQNAVEAALQRVNNAKDALNGDAKLIAAQNAAKQHLGTLTHITTAQRNDLTNQISQATNLAGVESVKQNANSLDGAMGNLQTAINDKSGTLASQNFLDADEQKRNAYNQAVSAAETILNKQTGPNTAKTAVEQALNNVNNAKHALNGTQNLNNAKQAAITAINGASDLNQKQKDALKAQANGAQRVSNAQDVQHNATELNTAMGTLKHAIADKTNTLASSKYVNADSTKQNAYTTKVTNAEHIISGTPTVVTTPSEVTAAANQVNSAKQELNGDERLREAKQNANTAIDALTQLNTPQKAKLKEQVGQANRLEDVQTVQTNGQALNNAMKGLRDSIANETTVKTSQNYTDASPNNQSTYNSAVSNAKGIINQTNNPTMDTSAITQATTQVNNAKNGLNGAENLRNAQNTAKQNLNTLSHLTNNQKSAISSQIDRAGHVSEVTATKNAATELNTQMGNLEQAIHDQNTVKQSVKFTDADKAKRDAYTNAVSRAEAILNKTQGANTSKQDVEAAIQNVSSAKNALNGDQNVTNAKNAAKNALNNLTSINNAQKRDLTTKIDQATTVAGVEAVSNTSTQLNTAMANLQNGINDKTNTLASENYHDADSDKKTAYTQAVTNAENILNKNSGSNLDKTAVENALSQVANAKGALNGNHNLEQAKSNANTTINGLQHLTTAQKDKLKQQVQQAQNVAGVDTVKSSANTLNGAMGTLRNSIQDNTATKNGQNYLDATERNKTNYNNAVDSANGVINATSNPNMDANAINQIATQVTSTKNALDGTHNLTQAKQTATNAIDGATNLNKAQKDALKAQVTSAQRVANVTSIQQTANELNTAMGQLQHGIDDENATKQTQKYRDAEQSKKTAYDQAVAAAKAILNKQTGSNSDKAAVDRALQQVTSTKDALNGDAKLAEAKAAAKQNLGTLNHITNAQRTDLEGQINQATTVDGVNTVKTNANTLDGAMNSLQGSINDKDATLRNQNYLDADESKRNAYTQAVTAAEGILNKQTGGNTSKADVDNALNAVTRAKAALNGADNLRNAKTSATNTIDGLPNLTQLQKDNLKHQVEQAQNVAGVNGVKDKGNTLNTAMGALRTSIQNDNTTKTSQNYLDASDSNKNNYNTAVNNANGVINATNNPNMDANAINGMANQVNTTKAALNGAQNLAQAKTNATNTINNAHDLNQKQKDALKTQVNNAQRVSDANNVQHTATELNSAMTALKAAIADKERTKASGNYVNADQEKRQAYDSKVTNAENIISGTPNATLTVNDVNSAASQVNAAKTALNGDNNLRVAKEHANNTIDGLAQLNNAQKAKLKEQVQSATTLDGVQTVKNSSQTLNTAMKGLRDSIANEATIKAGQNYTDASPNNRNEYDSAVTAAKAIINQTSNPTMEPNTITQVTSQVTTKEQALNGARNLAQAKTTAKNNLNNLTSINNAQKDALTRSIDGATTVAGVNQETAKATELNNAMHSLQNGINDETQTKQTQKYLDAEPSKKSAYDQAVNAAKAILTKASGQNVDKAAVEQALQNVNSTKTALNGDAKLNEAKAAAKQTLGTLTHINNAQRTALDNEITQATNVEGVNTVKAKAQQLDGAMGQLETSIRDKDTTLQSQNYQDADDAKRTAYSQAVNAAATILNKTAGGNTPKADVERAMQAVTQANTALNGIQNLDRAKQAANTAITNASDLNTKQKEALKAQVTSAGRVSAANGVEHTATELNTAMTALKRAIADKAETKASGNYVNADANKRQAYDEKVTAAENIVSGTPTPTLTPADVTNAATQVTNAKTQLNGNHNLEVAKQNANTAIDGLTSLNGPQKAKLKEQVGQATTLPNVQTVRDNAQTLNTAMKGLRDSIANEATIKAGQNYTDASQNKQTDYNSAVTAAKAIIGQTTSPSMNAQEINQAKDQVTAKQQALNGQENLRTAQTNAKQHLNGLSDLTDAQKDAVKRQIEGATHVNEVTQAQNNADALNTAMTNLKNGIQDQNTIKQGVNFTDADEAKRNAYTNAVTQAEQILNKAQGPNTSKDGVETALENVQRAKNELNGNQNVANAKTTAKNALNNLTSINNAQKEALKSQIEGATTVAGVNQVSTTASELNTAMSNLQNGINDEAATKAALNGTQNLEKAKQHANTAIDGLSHLTNAQKEALKQLVQQSTTVAEAQGNEQKANNVDAAMDKLRQSIADNATTKQNQNYTDASQNKKDAYNNAVTTAQGIIDQTTSPTLDPTVINQAAGQVSTTKNALNGNENLEAAKQQASQSLGSLDNLNNAQKQTVTDQINGAHTVDEANQIKQNAQNLNTAMGNLKQAIADKDATKATVNFTDADQAKQQAYNTAVTNAENIISKANGGNATQAEVEQAIKQVNAAKQALNGNANVQHAKDEATALINSSNDLNQAQKDALKQQVQNATTVAGVNNVKQTAQELNNAMTQLKQGIADKEQTKADGNFVNADPDKQNAYNQAVAKAEALISATPDVVVTPSEITAALNKVTQAKNDLNGNTNLATAKQNVQHAIDQLPNLNQAQRDEYSKQITQATLVPNVNAIQQAATTLNDAMTQLKQGIANKAQIKGSENYHDADTDKQTAYDNAVTKAEELLKQTTNPTMDPNTIQQALTKVNDTNQALNGNQKLADAKQDAKTTLGTLDHLNDAQKQALTTQVEQAPDIATVNNVKQNAQNLNNAMTNLNNALQDKTETLNSINFTDADQAKKDAYTNAVSHAEGILSKANGSNASQTEVEQAMQRVNEAKQALNGNDNVQRAKDAAKQVITNANDLNQAMTQLKQGIADKDQTKANGNFVNADTDKQNAYNNAVAHAEQIISGTPNANVDPQQVAQALQQVNQAKGDLNGNHNLQVAKDNANTAIDQLPNLNQPQKTALKDQVSHAELVTGVNAIKQNADALNNAMGTLKQQIQANSQVPQSVDFTQADQDKQQAYNNAANQAQQIANGIPTPVLTPDTVTQAVTTMNQAKDALNGDEKLAQAKQEALANLDTLRDLNQPQRDALRNQINQAQALATVEQTKQNAQNVNTAMSNLKQGIANKDTVKASENYHDADADKQTAYTNAVSQAEGIINQTTNPTLNPDEITRALTQVTDAKNGLNGEAKLATEKQNAKDAVSGMTHLNDAQKQALKGQIDQSPEIATVNQVKQTATSLDQAMDQLSQAINDKAQTLADGNYLNADPDKQNAYKQAVAKAEALLNKQSGTNEVQAQVESITNEVNAAKQALNGNDNLANAKQQAKQQLANLTHLNDAQKQSFESQITQAPLVTDVTTINQKAQTLDHAMELLRNSVADNQTTLASEDYHDATAQRQNDYNQAVTAANNIINQTTSPTMNPDDVNGATTQVNNTKVALDGDENLAAAKQQANNRLDQLDHLNNAQKQQLQSQITQSSDIAAVNGHKQTAESLNTAMGNLINAIADHQAVEQRGNFINADTDKQTAYNTAVNEAAAMINKQTGQNANQTEVEQAITKVQTTLQALNGDHNLQVAKTNATQAIDALTSLNDPQKTALKDQVTAATLVTAVHQIEQNANTLNQAMHGLRQSIQDNAATKANSKYINEDQPEQQNYDQAVQAANNIINEQTATLDNNAINQAATTVNTTKAALHGDVKLQNDKDHAKQTVSQLAHLNNAQKHMEDTLIDSETTRTAVKQDLTEAQALDQLMDALQQSIADKDATRASSAYVNAEPNKKQSYDEAVQNAESIIAGLNNPTINKGNVSSATQAVISSKNALDGVERLAQDKQTAGNSLNHLDQLTPAQQQALENQINNATTRDKVAEIIAQAQALNEAMKALKESIKDQPQTEASSKFINEDQAQKDAYTQAVQHAKDLINKTTDPTLAKSIIDQATQAVTDAKNNLHGDQKLAQDKQRATETLNNLSNLNTPQRQALENQINNAATRGEVAQKLTEAQALNQAMEALRNSIQDQQQTEAGSKFINEDKPQKDAYQAAVQNAKDLINQTNNPTLDKAQVEQLTQAVNQAKDNLHGDQKLADDKQHAVTDLNQLNGLNNPQRQALESQINNAATRGEVAQKLAEAKALDQAMQALRNSIQDQQQTESGSKFINEDKPQKDAYQAAVQNAKDLINQTGNPTLDKSQVEQLTQAVTTAKDNLHGDQKLARDQQQAVTTVNALPNLNHAQQQALTDAINAAPTRTEVAQHVQTATELDHAMETLKNKVDQVNTDKAQPNYTEASTDKKEAVDQALQAAESITDPTNGSNANKDAVDQVLTKLQEKENELNGNERVAEAKTQAKQTIDQLTHLNADQIATAKQNIDQATKLQPIAELVDQATQLNQSMDQLQQAVNEHANVEQTVDYTQADSDKQNAYKQAIADAENVLKQNANKQQVDQALQNILNAKQALNGDERVALAKTNGKHDIDQLNALNNAQQDGFKGRIDQSNDLNQIQQIVDEAKALNRAMDQLSQEITDNEGRTKGSTNYVNADTQVKQVYDETVDKAKQALDKSTGQNLTAKQVIKLNDAVTAAKKALNGEERLNNRKAEALQRLDQLTHLNNAQRQLAIQQINNAETLNKASRAINRATKLDNAMGSVQQYIDEQHLGVISSTNYINADDNLKANYDNAIANAAHELDKVQGNAIAKAEAEQLKQNIIDAQNALNGDQNLANAKDKANAFVNSLNGLNQQQQDLAHKAINNADTVSDVTDIVNNQIDLNDAMETLKHLVDNEIPNAEQTVNYQNADDNAKTNFDDAKRLANTLLNSDNTNVNDINGAIQAVNDAIHNLNGDQRLQDAKDKAIQSINQALANKLKEIEASNATDQDKLIAKNKAEELANSIINNINKATSNQAVSQVQTAGNHAIEQVHANEIPKAKIDANKDVDKQVQALIDEIDRNPNLTDKEKQALKDRINQILQQGHNGINNAMTKEEIEQAKAQLAQALQDIKDLVKAKEDAKQDVDKQVQALIDEIDQNPNLTDKEKQALKDRINQILQQGHNDINNAMTKEAIEQAKERLAQALQDIKDLVKAKEDAKNDIDKRVQALIDEIDQNPNLTDKEKQALKDRINQILQQGHNDINNALTKEEIEQAKAQLAQALQDIKDLVKAKEDAKNAIKALANAKRDQINSNPDLTPEQKAKALKEIDEAEKRALQNVENAQTIDQLNRGLNLGLDDIRNTHVWEVDEQPAVNEIFEATPEQILVNGELIVHRDDIITEQDILAHINLIDQLSAEVIDTPSTATISDSLTAKVEVTLLDGSKVIVNVPVKVVEKELSVVKQQAIESIENAAQQKINEINNSVTLTLEQKEAAIAEVNKLKQQAIDHVNNAPDVHSVEEIQQQEQAHIEQFNPEQFTIEQAKSNAIKSIEDAIQHMIDEIKARTDLTDKEKQEAIAKLNQLKEQAIQAIQRAQSIDEISEQLEQFKAQMKAANPTAKELAKRKQEAISRIKDFSNEKINSIRNSEIGTADEKQAAMNQINEIVLETIRDINNAHTLQQVEAALNNGIARISAVQIVTSDRAKQSSSTGNESNSHLTIGYGTANHPFNSSTIGHKKKLDEDDDIDPLHMRHFSNNFGNVIKNAIGVVGISGLLASFWFFIAKRRRKEDEEEELEIRDNNKDSIKETLDDTKHLPLLFAKRRRKEDEEDVTVEEKDSLNNGESLDKVKHTPFFLPKRRRKEDEEDVEVTNENTDEKVLKDNEHSPLLFAKRRKDKEEDVETTTSIESKDEDVPLLLAKKKNQKDNQSKDKKSASKNTSKKVAAKKKKKKAKKNKK</sequence>
<keyword id="KW-1003">Cell membrane</keyword>
<keyword id="KW-0472">Membrane</keyword>
<keyword id="KW-1185">Reference proteome</keyword>
<keyword id="KW-0677">Repeat</keyword>
<keyword id="KW-0732">Signal</keyword>
<keyword id="KW-0812">Transmembrane</keyword>
<keyword id="KW-1133">Transmembrane helix</keyword>
<reference key="1">
    <citation type="book" date="2006" name="Gram positive pathogens, 2nd edition">
        <title>The Staphylococcus aureus NCTC 8325 genome.</title>
        <editorList>
            <person name="Fischetti V."/>
            <person name="Novick R."/>
            <person name="Ferretti J."/>
            <person name="Portnoy D."/>
            <person name="Rood J."/>
        </editorList>
        <authorList>
            <person name="Gillaspy A.F."/>
            <person name="Worrell V."/>
            <person name="Orvis J."/>
            <person name="Roe B.A."/>
            <person name="Dyer D.W."/>
            <person name="Iandolo J.J."/>
        </authorList>
    </citation>
    <scope>NUCLEOTIDE SEQUENCE [LARGE SCALE GENOMIC DNA]</scope>
    <source>
        <strain>NCTC 8325 / PS 47</strain>
    </source>
</reference>
<reference key="2">
    <citation type="journal article" date="2002" name="Infect. Immun.">
        <title>Analysis of ebh, a 1.1-megadalton cell wall-associated fibronectin-binding protein of Staphylococcus aureus.</title>
        <authorList>
            <person name="Clarke S.R."/>
            <person name="Harris L.G."/>
            <person name="Richards R.G."/>
            <person name="Foster S.J."/>
        </authorList>
    </citation>
    <scope>FUNCTION IN FIBRONECTIN BINDING</scope>
    <scope>REPRESSION BY AGR</scope>
</reference>
<accession>Q2FYJ6</accession>
<feature type="signal peptide" evidence="1">
    <location>
        <begin position="1"/>
        <end position="39"/>
    </location>
</feature>
<feature type="chain" id="PRO_0000345972" description="Extracellular matrix-binding protein ebh">
    <location>
        <begin position="40"/>
        <end position="9535"/>
    </location>
</feature>
<feature type="transmembrane region" description="Helical" evidence="1">
    <location>
        <begin position="9341"/>
        <end position="9361"/>
    </location>
</feature>
<feature type="domain" description="FIVAR 1">
    <location>
        <begin position="2524"/>
        <end position="2580"/>
    </location>
</feature>
<feature type="domain" description="FIVAR 2">
    <location>
        <begin position="2610"/>
        <end position="2666"/>
    </location>
</feature>
<feature type="domain" description="FIVAR 3">
    <location>
        <begin position="2687"/>
        <end position="2750"/>
    </location>
</feature>
<feature type="domain" description="FIVAR 4">
    <location>
        <begin position="2780"/>
        <end position="2836"/>
    </location>
</feature>
<feature type="domain" description="FIVAR 5">
    <location>
        <begin position="2864"/>
        <end position="2919"/>
    </location>
</feature>
<feature type="domain" description="FIVAR 6">
    <location>
        <begin position="2947"/>
        <end position="3002"/>
    </location>
</feature>
<feature type="domain" description="FIVAR 7">
    <location>
        <begin position="3030"/>
        <end position="3085"/>
    </location>
</feature>
<feature type="domain" description="FIVAR 8">
    <location>
        <begin position="3154"/>
        <end position="3212"/>
    </location>
</feature>
<feature type="domain" description="FIVAR 9">
    <location>
        <begin position="3280"/>
        <end position="3339"/>
    </location>
</feature>
<feature type="domain" description="FIVAR 10">
    <location>
        <begin position="3407"/>
        <end position="3465"/>
    </location>
</feature>
<feature type="domain" description="FIVAR 11">
    <location>
        <begin position="3533"/>
        <end position="3591"/>
    </location>
</feature>
<feature type="domain" description="FIVAR 12">
    <location>
        <begin position="3659"/>
        <end position="3717"/>
    </location>
</feature>
<feature type="domain" description="FIVAR 13">
    <location>
        <begin position="3785"/>
        <end position="3843"/>
    </location>
</feature>
<feature type="domain" description="FIVAR 14">
    <location>
        <begin position="3911"/>
        <end position="3969"/>
    </location>
</feature>
<feature type="domain" description="FIVAR 15">
    <location>
        <begin position="4037"/>
        <end position="4095"/>
    </location>
</feature>
<feature type="domain" description="FIVAR 16">
    <location>
        <begin position="4163"/>
        <end position="4221"/>
    </location>
</feature>
<feature type="domain" description="FIVAR 17">
    <location>
        <begin position="4289"/>
        <end position="4347"/>
    </location>
</feature>
<feature type="domain" description="FIVAR 18">
    <location>
        <begin position="4415"/>
        <end position="4473"/>
    </location>
</feature>
<feature type="domain" description="FIVAR 19">
    <location>
        <begin position="4541"/>
        <end position="4599"/>
    </location>
</feature>
<feature type="domain" description="FIVAR 20">
    <location>
        <begin position="4667"/>
        <end position="4725"/>
    </location>
</feature>
<feature type="domain" description="FIVAR 21">
    <location>
        <begin position="4793"/>
        <end position="4851"/>
    </location>
</feature>
<feature type="domain" description="FIVAR 22">
    <location>
        <begin position="4919"/>
        <end position="4977"/>
    </location>
</feature>
<feature type="domain" description="FIVAR 23">
    <location>
        <begin position="5045"/>
        <end position="5103"/>
    </location>
</feature>
<feature type="domain" description="FIVAR 24">
    <location>
        <begin position="5171"/>
        <end position="5229"/>
    </location>
</feature>
<feature type="domain" description="FIVAR 25">
    <location>
        <begin position="5297"/>
        <end position="5355"/>
    </location>
</feature>
<feature type="domain" description="FIVAR 26">
    <location>
        <begin position="5423"/>
        <end position="5481"/>
    </location>
</feature>
<feature type="domain" description="FIVAR 27">
    <location>
        <begin position="5549"/>
        <end position="5607"/>
    </location>
</feature>
<feature type="domain" description="FIVAR 28">
    <location>
        <begin position="5675"/>
        <end position="5733"/>
    </location>
</feature>
<feature type="domain" description="FIVAR 29">
    <location>
        <begin position="5801"/>
        <end position="5859"/>
    </location>
</feature>
<feature type="domain" description="FIVAR 30">
    <location>
        <begin position="6002"/>
        <end position="6060"/>
    </location>
</feature>
<feature type="domain" description="FIVAR 31">
    <location>
        <begin position="6128"/>
        <end position="6186"/>
    </location>
</feature>
<feature type="domain" description="FIVAR 32">
    <location>
        <begin position="6254"/>
        <end position="6312"/>
    </location>
</feature>
<feature type="domain" description="FIVAR 33">
    <location>
        <begin position="6380"/>
        <end position="6438"/>
    </location>
</feature>
<feature type="domain" description="FIVAR 34">
    <location>
        <begin position="6506"/>
        <end position="6564"/>
    </location>
</feature>
<feature type="domain" description="FIVAR 35">
    <location>
        <begin position="6606"/>
        <end position="6659"/>
    </location>
</feature>
<feature type="domain" description="FIVAR 36">
    <location>
        <begin position="6727"/>
        <end position="6785"/>
    </location>
</feature>
<feature type="domain" description="FIVAR 37">
    <location>
        <begin position="6853"/>
        <end position="6911"/>
    </location>
</feature>
<feature type="domain" description="FIVAR 38">
    <location>
        <begin position="6979"/>
        <end position="7040"/>
    </location>
</feature>
<feature type="domain" description="FIVAR 39">
    <location>
        <begin position="7105"/>
        <end position="7163"/>
    </location>
</feature>
<feature type="domain" description="FIVAR 40">
    <location>
        <begin position="7231"/>
        <end position="7289"/>
    </location>
</feature>
<feature type="domain" description="FIVAR 41">
    <location>
        <begin position="7357"/>
        <end position="7414"/>
    </location>
</feature>
<feature type="domain" description="FIVAR 42">
    <location>
        <begin position="7482"/>
        <end position="7540"/>
    </location>
</feature>
<feature type="domain" description="FIVAR 43">
    <location>
        <begin position="7608"/>
        <end position="7666"/>
    </location>
</feature>
<feature type="domain" description="FIVAR 44">
    <location>
        <begin position="7734"/>
        <end position="7792"/>
    </location>
</feature>
<feature type="domain" description="FIVAR 45">
    <location>
        <begin position="7860"/>
        <end position="7918"/>
    </location>
</feature>
<feature type="domain" description="FIVAR 46">
    <location>
        <begin position="7986"/>
        <end position="8044"/>
    </location>
</feature>
<feature type="domain" description="FIVAR 47">
    <location>
        <begin position="8112"/>
        <end position="8166"/>
    </location>
</feature>
<feature type="domain" description="FIVAR 48">
    <location>
        <begin position="8234"/>
        <end position="8293"/>
    </location>
</feature>
<feature type="domain" description="FIVAR 49">
    <location>
        <begin position="8488"/>
        <end position="8544"/>
    </location>
</feature>
<feature type="region of interest" description="Disordered" evidence="2">
    <location>
        <begin position="41"/>
        <end position="86"/>
    </location>
</feature>
<feature type="region of interest" description="Disordered" evidence="2">
    <location>
        <begin position="99"/>
        <end position="152"/>
    </location>
</feature>
<feature type="region of interest" description="Disordered" evidence="2">
    <location>
        <begin position="250"/>
        <end position="277"/>
    </location>
</feature>
<feature type="region of interest" description="Disordered" evidence="2">
    <location>
        <begin position="1342"/>
        <end position="1373"/>
    </location>
</feature>
<feature type="region of interest" description="Disordered" evidence="2">
    <location>
        <begin position="2418"/>
        <end position="2438"/>
    </location>
</feature>
<feature type="region of interest" description="Disordered" evidence="2">
    <location>
        <begin position="3029"/>
        <end position="3048"/>
    </location>
</feature>
<feature type="region of interest" description="Fibronectin-binding">
    <location>
        <begin position="3203"/>
        <end position="3595"/>
    </location>
</feature>
<feature type="region of interest" description="Disordered" evidence="2">
    <location>
        <begin position="9281"/>
        <end position="9300"/>
    </location>
</feature>
<feature type="region of interest" description="Disordered" evidence="2">
    <location>
        <begin position="9438"/>
        <end position="9535"/>
    </location>
</feature>
<feature type="compositionally biased region" description="Polar residues" evidence="2">
    <location>
        <begin position="41"/>
        <end position="59"/>
    </location>
</feature>
<feature type="compositionally biased region" description="Low complexity" evidence="2">
    <location>
        <begin position="65"/>
        <end position="80"/>
    </location>
</feature>
<feature type="compositionally biased region" description="Polar residues" evidence="2">
    <location>
        <begin position="99"/>
        <end position="117"/>
    </location>
</feature>
<feature type="compositionally biased region" description="Basic and acidic residues" evidence="2">
    <location>
        <begin position="130"/>
        <end position="140"/>
    </location>
</feature>
<feature type="compositionally biased region" description="Polar residues" evidence="2">
    <location>
        <begin position="141"/>
        <end position="151"/>
    </location>
</feature>
<feature type="compositionally biased region" description="Polar residues" evidence="2">
    <location>
        <begin position="250"/>
        <end position="266"/>
    </location>
</feature>
<feature type="compositionally biased region" description="Polar residues" evidence="2">
    <location>
        <begin position="1360"/>
        <end position="1373"/>
    </location>
</feature>
<feature type="compositionally biased region" description="Polar residues" evidence="2">
    <location>
        <begin position="2427"/>
        <end position="2438"/>
    </location>
</feature>
<feature type="compositionally biased region" description="Polar residues" evidence="2">
    <location>
        <begin position="9285"/>
        <end position="9297"/>
    </location>
</feature>
<feature type="compositionally biased region" description="Basic and acidic residues" evidence="2">
    <location>
        <begin position="9453"/>
        <end position="9463"/>
    </location>
</feature>
<feature type="compositionally biased region" description="Basic and acidic residues" evidence="2">
    <location>
        <begin position="9502"/>
        <end position="9512"/>
    </location>
</feature>
<feature type="compositionally biased region" description="Basic residues" evidence="2">
    <location>
        <begin position="9517"/>
        <end position="9535"/>
    </location>
</feature>